<reference key="1">
    <citation type="journal article" date="2009" name="PLoS Genet.">
        <title>Adaptations to submarine hydrothermal environments exemplified by the genome of Nautilia profundicola.</title>
        <authorList>
            <person name="Campbell B.J."/>
            <person name="Smith J.L."/>
            <person name="Hanson T.E."/>
            <person name="Klotz M.G."/>
            <person name="Stein L.Y."/>
            <person name="Lee C.K."/>
            <person name="Wu D."/>
            <person name="Robinson J.M."/>
            <person name="Khouri H.M."/>
            <person name="Eisen J.A."/>
            <person name="Cary S.C."/>
        </authorList>
    </citation>
    <scope>NUCLEOTIDE SEQUENCE [LARGE SCALE GENOMIC DNA]</scope>
    <source>
        <strain>ATCC BAA-1463 / DSM 18972 / AmH</strain>
    </source>
</reference>
<dbReference type="EC" id="2.8.1.6" evidence="1"/>
<dbReference type="EMBL" id="CP001279">
    <property type="protein sequence ID" value="ACM92846.1"/>
    <property type="molecule type" value="Genomic_DNA"/>
</dbReference>
<dbReference type="RefSeq" id="WP_015901898.1">
    <property type="nucleotide sequence ID" value="NC_012115.1"/>
</dbReference>
<dbReference type="SMR" id="B9L7E1"/>
<dbReference type="STRING" id="598659.NAMH_0112"/>
<dbReference type="KEGG" id="nam:NAMH_0112"/>
<dbReference type="eggNOG" id="COG0502">
    <property type="taxonomic scope" value="Bacteria"/>
</dbReference>
<dbReference type="HOGENOM" id="CLU_033172_2_1_7"/>
<dbReference type="OrthoDB" id="9786826at2"/>
<dbReference type="UniPathway" id="UPA00078">
    <property type="reaction ID" value="UER00162"/>
</dbReference>
<dbReference type="Proteomes" id="UP000000448">
    <property type="component" value="Chromosome"/>
</dbReference>
<dbReference type="GO" id="GO:0051537">
    <property type="term" value="F:2 iron, 2 sulfur cluster binding"/>
    <property type="evidence" value="ECO:0007669"/>
    <property type="project" value="UniProtKB-KW"/>
</dbReference>
<dbReference type="GO" id="GO:0051539">
    <property type="term" value="F:4 iron, 4 sulfur cluster binding"/>
    <property type="evidence" value="ECO:0007669"/>
    <property type="project" value="UniProtKB-KW"/>
</dbReference>
<dbReference type="GO" id="GO:0004076">
    <property type="term" value="F:biotin synthase activity"/>
    <property type="evidence" value="ECO:0007669"/>
    <property type="project" value="UniProtKB-UniRule"/>
</dbReference>
<dbReference type="GO" id="GO:0005506">
    <property type="term" value="F:iron ion binding"/>
    <property type="evidence" value="ECO:0007669"/>
    <property type="project" value="UniProtKB-UniRule"/>
</dbReference>
<dbReference type="GO" id="GO:0009102">
    <property type="term" value="P:biotin biosynthetic process"/>
    <property type="evidence" value="ECO:0007669"/>
    <property type="project" value="UniProtKB-UniRule"/>
</dbReference>
<dbReference type="CDD" id="cd01335">
    <property type="entry name" value="Radical_SAM"/>
    <property type="match status" value="1"/>
</dbReference>
<dbReference type="Gene3D" id="3.20.20.70">
    <property type="entry name" value="Aldolase class I"/>
    <property type="match status" value="1"/>
</dbReference>
<dbReference type="HAMAP" id="MF_01694">
    <property type="entry name" value="BioB"/>
    <property type="match status" value="1"/>
</dbReference>
<dbReference type="InterPro" id="IPR013785">
    <property type="entry name" value="Aldolase_TIM"/>
</dbReference>
<dbReference type="InterPro" id="IPR010722">
    <property type="entry name" value="BATS_dom"/>
</dbReference>
<dbReference type="InterPro" id="IPR002684">
    <property type="entry name" value="Biotin_synth/BioAB"/>
</dbReference>
<dbReference type="InterPro" id="IPR024177">
    <property type="entry name" value="Biotin_synthase"/>
</dbReference>
<dbReference type="InterPro" id="IPR006638">
    <property type="entry name" value="Elp3/MiaA/NifB-like_rSAM"/>
</dbReference>
<dbReference type="InterPro" id="IPR007197">
    <property type="entry name" value="rSAM"/>
</dbReference>
<dbReference type="NCBIfam" id="TIGR00433">
    <property type="entry name" value="bioB"/>
    <property type="match status" value="1"/>
</dbReference>
<dbReference type="NCBIfam" id="NF006308">
    <property type="entry name" value="PRK08508.1"/>
    <property type="match status" value="1"/>
</dbReference>
<dbReference type="PANTHER" id="PTHR22976">
    <property type="entry name" value="BIOTIN SYNTHASE"/>
    <property type="match status" value="1"/>
</dbReference>
<dbReference type="PANTHER" id="PTHR22976:SF2">
    <property type="entry name" value="BIOTIN SYNTHASE, MITOCHONDRIAL"/>
    <property type="match status" value="1"/>
</dbReference>
<dbReference type="Pfam" id="PF06968">
    <property type="entry name" value="BATS"/>
    <property type="match status" value="1"/>
</dbReference>
<dbReference type="Pfam" id="PF04055">
    <property type="entry name" value="Radical_SAM"/>
    <property type="match status" value="1"/>
</dbReference>
<dbReference type="PIRSF" id="PIRSF001619">
    <property type="entry name" value="Biotin_synth"/>
    <property type="match status" value="1"/>
</dbReference>
<dbReference type="SFLD" id="SFLDG01278">
    <property type="entry name" value="biotin_synthase_like"/>
    <property type="match status" value="1"/>
</dbReference>
<dbReference type="SFLD" id="SFLDS00029">
    <property type="entry name" value="Radical_SAM"/>
    <property type="match status" value="1"/>
</dbReference>
<dbReference type="SMART" id="SM00876">
    <property type="entry name" value="BATS"/>
    <property type="match status" value="1"/>
</dbReference>
<dbReference type="SMART" id="SM00729">
    <property type="entry name" value="Elp3"/>
    <property type="match status" value="1"/>
</dbReference>
<dbReference type="SUPFAM" id="SSF102114">
    <property type="entry name" value="Radical SAM enzymes"/>
    <property type="match status" value="1"/>
</dbReference>
<dbReference type="PROSITE" id="PS51918">
    <property type="entry name" value="RADICAL_SAM"/>
    <property type="match status" value="1"/>
</dbReference>
<accession>B9L7E1</accession>
<sequence length="276" mass="30734">MKKIYLCAISNIRSGACNEDCKFCTQSVKWGADINRYKQKDLKTIVNEAKLAKKNGATGFCLVTSGKGLDDKTLEYVCSAAKSVIKEVDISIIACNGTAGKDSLKELKKAGVKIYNHNLETSREYYPKICSTHTWDERFETCENIKSVGLQLCCGGIFGMGESNEDIESFIRSLKELKPNGIPLNFFIENEKLPLKATHNKDFALKTVKRFANEFKEAIIMLAGGREIVFGNEWTEALKVGANSIVIGDYLTTKGERPDRDLEILLNEGFEIANEC</sequence>
<protein>
    <recommendedName>
        <fullName evidence="1">Biotin synthase</fullName>
        <ecNumber evidence="1">2.8.1.6</ecNumber>
    </recommendedName>
</protein>
<proteinExistence type="inferred from homology"/>
<organism>
    <name type="scientific">Nautilia profundicola (strain ATCC BAA-1463 / DSM 18972 / AmH)</name>
    <dbReference type="NCBI Taxonomy" id="598659"/>
    <lineage>
        <taxon>Bacteria</taxon>
        <taxon>Pseudomonadati</taxon>
        <taxon>Campylobacterota</taxon>
        <taxon>Epsilonproteobacteria</taxon>
        <taxon>Nautiliales</taxon>
        <taxon>Nautiliaceae</taxon>
        <taxon>Nautilia</taxon>
    </lineage>
</organism>
<feature type="chain" id="PRO_0000381492" description="Biotin synthase">
    <location>
        <begin position="1"/>
        <end position="276"/>
    </location>
</feature>
<feature type="domain" description="Radical SAM core" evidence="2">
    <location>
        <begin position="1"/>
        <end position="226"/>
    </location>
</feature>
<feature type="binding site" evidence="1">
    <location>
        <position position="17"/>
    </location>
    <ligand>
        <name>[4Fe-4S] cluster</name>
        <dbReference type="ChEBI" id="CHEBI:49883"/>
        <note>4Fe-4S-S-AdoMet</note>
    </ligand>
</feature>
<feature type="binding site" evidence="1">
    <location>
        <position position="21"/>
    </location>
    <ligand>
        <name>[4Fe-4S] cluster</name>
        <dbReference type="ChEBI" id="CHEBI:49883"/>
        <note>4Fe-4S-S-AdoMet</note>
    </ligand>
</feature>
<feature type="binding site" evidence="1">
    <location>
        <position position="24"/>
    </location>
    <ligand>
        <name>[4Fe-4S] cluster</name>
        <dbReference type="ChEBI" id="CHEBI:49883"/>
        <note>4Fe-4S-S-AdoMet</note>
    </ligand>
</feature>
<feature type="binding site" evidence="1">
    <location>
        <position position="61"/>
    </location>
    <ligand>
        <name>[2Fe-2S] cluster</name>
        <dbReference type="ChEBI" id="CHEBI:190135"/>
    </ligand>
</feature>
<feature type="binding site" evidence="1">
    <location>
        <position position="95"/>
    </location>
    <ligand>
        <name>[2Fe-2S] cluster</name>
        <dbReference type="ChEBI" id="CHEBI:190135"/>
    </ligand>
</feature>
<feature type="binding site" evidence="1">
    <location>
        <position position="153"/>
    </location>
    <ligand>
        <name>[2Fe-2S] cluster</name>
        <dbReference type="ChEBI" id="CHEBI:190135"/>
    </ligand>
</feature>
<keyword id="KW-0001">2Fe-2S</keyword>
<keyword id="KW-0004">4Fe-4S</keyword>
<keyword id="KW-0093">Biotin biosynthesis</keyword>
<keyword id="KW-0408">Iron</keyword>
<keyword id="KW-0411">Iron-sulfur</keyword>
<keyword id="KW-0479">Metal-binding</keyword>
<keyword id="KW-0949">S-adenosyl-L-methionine</keyword>
<keyword id="KW-0808">Transferase</keyword>
<gene>
    <name evidence="1" type="primary">bioB</name>
    <name type="ordered locus">NAMH_0112</name>
</gene>
<name>BIOB_NAUPA</name>
<evidence type="ECO:0000255" key="1">
    <source>
        <dbReference type="HAMAP-Rule" id="MF_01694"/>
    </source>
</evidence>
<evidence type="ECO:0000255" key="2">
    <source>
        <dbReference type="PROSITE-ProRule" id="PRU01266"/>
    </source>
</evidence>
<comment type="function">
    <text evidence="1">Catalyzes the conversion of dethiobiotin (DTB) to biotin by the insertion of a sulfur atom into dethiobiotin via a radical-based mechanism.</text>
</comment>
<comment type="catalytic activity">
    <reaction evidence="1">
        <text>(4R,5S)-dethiobiotin + (sulfur carrier)-SH + 2 reduced [2Fe-2S]-[ferredoxin] + 2 S-adenosyl-L-methionine = (sulfur carrier)-H + biotin + 2 5'-deoxyadenosine + 2 L-methionine + 2 oxidized [2Fe-2S]-[ferredoxin]</text>
        <dbReference type="Rhea" id="RHEA:22060"/>
        <dbReference type="Rhea" id="RHEA-COMP:10000"/>
        <dbReference type="Rhea" id="RHEA-COMP:10001"/>
        <dbReference type="Rhea" id="RHEA-COMP:14737"/>
        <dbReference type="Rhea" id="RHEA-COMP:14739"/>
        <dbReference type="ChEBI" id="CHEBI:17319"/>
        <dbReference type="ChEBI" id="CHEBI:29917"/>
        <dbReference type="ChEBI" id="CHEBI:33737"/>
        <dbReference type="ChEBI" id="CHEBI:33738"/>
        <dbReference type="ChEBI" id="CHEBI:57586"/>
        <dbReference type="ChEBI" id="CHEBI:57844"/>
        <dbReference type="ChEBI" id="CHEBI:59789"/>
        <dbReference type="ChEBI" id="CHEBI:64428"/>
        <dbReference type="ChEBI" id="CHEBI:149473"/>
        <dbReference type="EC" id="2.8.1.6"/>
    </reaction>
</comment>
<comment type="cofactor">
    <cofactor evidence="1">
        <name>[4Fe-4S] cluster</name>
        <dbReference type="ChEBI" id="CHEBI:49883"/>
    </cofactor>
    <text evidence="1">Binds 1 [4Fe-4S] cluster. The cluster is coordinated with 3 cysteines and an exchangeable S-adenosyl-L-methionine.</text>
</comment>
<comment type="cofactor">
    <cofactor evidence="1">
        <name>[2Fe-2S] cluster</name>
        <dbReference type="ChEBI" id="CHEBI:190135"/>
    </cofactor>
    <text evidence="1">Binds 1 [2Fe-2S] cluster. The cluster is coordinated with 3 cysteines and 1 arginine.</text>
</comment>
<comment type="pathway">
    <text evidence="1">Cofactor biosynthesis; biotin biosynthesis; biotin from 7,8-diaminononanoate: step 2/2.</text>
</comment>
<comment type="subunit">
    <text evidence="1">Homodimer.</text>
</comment>
<comment type="similarity">
    <text evidence="1">Belongs to the radical SAM superfamily. Biotin synthase family.</text>
</comment>